<sequence length="243" mass="25958">MQSNHDSDASQAGDRPARPALRPLTPVEGRVLGVLVEKQHTVPDTYPLSLNALASGCNQKTARAPVMNVSEADILEAIDGLKGLSLVFEGSSSRVPRFEHNMQRVLAVPSQSVALLAMLLLRGPQTAAELRLNTARLHGFADISSVEAFLDELASHAPPFVVRLPRAPGARENRWMHLLSGEVSAAADADDADRTTGGATAAPGELEQLRAEQQALTEKVAKLQSLVEHMAGQLGIPVDEFLD</sequence>
<accession>Q0K292</accession>
<organism>
    <name type="scientific">Cupriavidus necator (strain ATCC 17699 / DSM 428 / KCTC 22496 / NCIMB 10442 / H16 / Stanier 337)</name>
    <name type="common">Ralstonia eutropha</name>
    <dbReference type="NCBI Taxonomy" id="381666"/>
    <lineage>
        <taxon>Bacteria</taxon>
        <taxon>Pseudomonadati</taxon>
        <taxon>Pseudomonadota</taxon>
        <taxon>Betaproteobacteria</taxon>
        <taxon>Burkholderiales</taxon>
        <taxon>Burkholderiaceae</taxon>
        <taxon>Cupriavidus</taxon>
    </lineage>
</organism>
<reference key="1">
    <citation type="journal article" date="2006" name="Nat. Biotechnol.">
        <title>Genome sequence of the bioplastic-producing 'Knallgas' bacterium Ralstonia eutropha H16.</title>
        <authorList>
            <person name="Pohlmann A."/>
            <person name="Fricke W.F."/>
            <person name="Reinecke F."/>
            <person name="Kusian B."/>
            <person name="Liesegang H."/>
            <person name="Cramm R."/>
            <person name="Eitinger T."/>
            <person name="Ewering C."/>
            <person name="Poetter M."/>
            <person name="Schwartz E."/>
            <person name="Strittmatter A."/>
            <person name="Voss I."/>
            <person name="Gottschalk G."/>
            <person name="Steinbuechel A."/>
            <person name="Friedrich B."/>
            <person name="Bowien B."/>
        </authorList>
    </citation>
    <scope>NUCLEOTIDE SEQUENCE [LARGE SCALE GENOMIC DNA]</scope>
    <source>
        <strain>ATCC 17699 / DSM 428 / KCTC 22496 / NCIMB 10442 / H16 / Stanier 337</strain>
    </source>
</reference>
<keyword id="KW-1185">Reference proteome</keyword>
<dbReference type="EMBL" id="AM260480">
    <property type="protein sequence ID" value="CAJ95882.1"/>
    <property type="status" value="ALT_INIT"/>
    <property type="molecule type" value="Genomic_DNA"/>
</dbReference>
<dbReference type="RefSeq" id="WP_010812435.1">
    <property type="nucleotide sequence ID" value="NZ_CP039288.1"/>
</dbReference>
<dbReference type="SMR" id="Q0K292"/>
<dbReference type="STRING" id="381666.H16_B1091"/>
<dbReference type="KEGG" id="reh:H16_B1091"/>
<dbReference type="eggNOG" id="COG3132">
    <property type="taxonomic scope" value="Bacteria"/>
</dbReference>
<dbReference type="HOGENOM" id="CLU_057831_0_0_4"/>
<dbReference type="OrthoDB" id="9784785at2"/>
<dbReference type="Proteomes" id="UP000008210">
    <property type="component" value="Chromosome 2"/>
</dbReference>
<dbReference type="Gene3D" id="1.10.10.10">
    <property type="entry name" value="Winged helix-like DNA-binding domain superfamily/Winged helix DNA-binding domain"/>
    <property type="match status" value="2"/>
</dbReference>
<dbReference type="HAMAP" id="MF_01584">
    <property type="entry name" value="UPF0502"/>
    <property type="match status" value="1"/>
</dbReference>
<dbReference type="InterPro" id="IPR007432">
    <property type="entry name" value="DUF480"/>
</dbReference>
<dbReference type="InterPro" id="IPR036388">
    <property type="entry name" value="WH-like_DNA-bd_sf"/>
</dbReference>
<dbReference type="InterPro" id="IPR036390">
    <property type="entry name" value="WH_DNA-bd_sf"/>
</dbReference>
<dbReference type="PANTHER" id="PTHR38768">
    <property type="entry name" value="UPF0502 PROTEIN YCEH"/>
    <property type="match status" value="1"/>
</dbReference>
<dbReference type="PANTHER" id="PTHR38768:SF1">
    <property type="entry name" value="UPF0502 PROTEIN YCEH"/>
    <property type="match status" value="1"/>
</dbReference>
<dbReference type="Pfam" id="PF04337">
    <property type="entry name" value="DUF480"/>
    <property type="match status" value="1"/>
</dbReference>
<dbReference type="SUPFAM" id="SSF46785">
    <property type="entry name" value="Winged helix' DNA-binding domain"/>
    <property type="match status" value="2"/>
</dbReference>
<proteinExistence type="inferred from homology"/>
<gene>
    <name type="ordered locus">H16_B1091</name>
</gene>
<evidence type="ECO:0000255" key="1">
    <source>
        <dbReference type="HAMAP-Rule" id="MF_01584"/>
    </source>
</evidence>
<evidence type="ECO:0000256" key="2">
    <source>
        <dbReference type="SAM" id="MobiDB-lite"/>
    </source>
</evidence>
<evidence type="ECO:0000305" key="3"/>
<protein>
    <recommendedName>
        <fullName evidence="1">UPF0502 protein H16_B1091</fullName>
    </recommendedName>
</protein>
<comment type="similarity">
    <text evidence="1">Belongs to the UPF0502 family.</text>
</comment>
<comment type="sequence caution" evidence="3">
    <conflict type="erroneous initiation">
        <sequence resource="EMBL-CDS" id="CAJ95882"/>
    </conflict>
</comment>
<feature type="chain" id="PRO_0000309412" description="UPF0502 protein H16_B1091">
    <location>
        <begin position="1"/>
        <end position="243"/>
    </location>
</feature>
<feature type="region of interest" description="Disordered" evidence="2">
    <location>
        <begin position="1"/>
        <end position="23"/>
    </location>
</feature>
<name>Y5091_CUPNH</name>